<keyword id="KW-0244">Early protein</keyword>
<proteinExistence type="inferred from homology"/>
<gene>
    <name type="ordered locus">Pret-050</name>
</gene>
<evidence type="ECO:0000250" key="1">
    <source>
        <dbReference type="UniProtKB" id="Q65141"/>
    </source>
</evidence>
<evidence type="ECO:0000305" key="2"/>
<organism>
    <name type="scientific">African swine fever virus (isolate Tick/South Africa/Pretoriuskop Pr4/1996)</name>
    <name type="common">ASFV</name>
    <dbReference type="NCBI Taxonomy" id="561443"/>
    <lineage>
        <taxon>Viruses</taxon>
        <taxon>Varidnaviria</taxon>
        <taxon>Bamfordvirae</taxon>
        <taxon>Nucleocytoviricota</taxon>
        <taxon>Pokkesviricetes</taxon>
        <taxon>Asfuvirales</taxon>
        <taxon>Asfarviridae</taxon>
        <taxon>Asfivirus</taxon>
        <taxon>African swine fever virus</taxon>
    </lineage>
</organism>
<organismHost>
    <name type="scientific">Ornithodoros</name>
    <name type="common">relapsing fever ticks</name>
    <dbReference type="NCBI Taxonomy" id="6937"/>
</organismHost>
<organismHost>
    <name type="scientific">Phacochoerus aethiopicus</name>
    <name type="common">Warthog</name>
    <dbReference type="NCBI Taxonomy" id="85517"/>
</organismHost>
<organismHost>
    <name type="scientific">Phacochoerus africanus</name>
    <name type="common">Warthog</name>
    <dbReference type="NCBI Taxonomy" id="41426"/>
</organismHost>
<organismHost>
    <name type="scientific">Potamochoerus larvatus</name>
    <name type="common">Bushpig</name>
    <dbReference type="NCBI Taxonomy" id="273792"/>
</organismHost>
<organismHost>
    <name type="scientific">Sus scrofa</name>
    <name type="common">Pig</name>
    <dbReference type="NCBI Taxonomy" id="9823"/>
</organismHost>
<name>36015_ASFP4</name>
<sequence length="276" mass="31684">MVLVEFLTGFFYLYGKRLFSISKVMDMICLDYYTIIPAPLAMMLAARLKNYDLMKRLHEWEISVDYALLVVDDVPSIDFCLSLGAKSPTRAQKRELLRDNTFNPVYKYLMNCSGFPTKREKNIPCDVQCERLQKNIIKELVFNCSVLLEMVLHTEREYAYALHCAAKHNQLPILMYCWQQSTDAESILLKTCCSDKNINCFNYCILYGGAQNLDAAMVEAAKHDARMLINYCVMLGGRSLNQAKETAAMFGHIECAQHCFKLQSYVMDTLNVDDTD</sequence>
<reference key="1">
    <citation type="submission" date="2003-03" db="EMBL/GenBank/DDBJ databases">
        <title>African swine fever virus genomes.</title>
        <authorList>
            <person name="Kutish G.F."/>
            <person name="Rock D.L."/>
        </authorList>
    </citation>
    <scope>NUCLEOTIDE SEQUENCE [LARGE SCALE GENOMIC DNA]</scope>
</reference>
<accession>P0C9R0</accession>
<feature type="chain" id="PRO_0000373295" description="Protein MGF 360-15R">
    <location>
        <begin position="1"/>
        <end position="276"/>
    </location>
</feature>
<comment type="function">
    <text evidence="1">Plays a role in virus cell tropism, and may be required for efficient virus replication in macrophages.</text>
</comment>
<comment type="induction">
    <text evidence="2">Expressed in the early phase of the viral replicative cycle.</text>
</comment>
<comment type="similarity">
    <text evidence="2">Belongs to the asfivirus MGF 360 family.</text>
</comment>
<dbReference type="EMBL" id="AY261363">
    <property type="status" value="NOT_ANNOTATED_CDS"/>
    <property type="molecule type" value="Genomic_DNA"/>
</dbReference>
<dbReference type="Proteomes" id="UP000000859">
    <property type="component" value="Segment"/>
</dbReference>
<protein>
    <recommendedName>
        <fullName>Protein MGF 360-15R</fullName>
    </recommendedName>
</protein>